<accession>A2QFV9</accession>
<evidence type="ECO:0000250" key="1"/>
<evidence type="ECO:0000255" key="2"/>
<evidence type="ECO:0000305" key="3"/>
<gene>
    <name type="primary">axhA</name>
    <name type="ORF">An03g00960</name>
</gene>
<proteinExistence type="inferred from homology"/>
<organism>
    <name type="scientific">Aspergillus niger (strain ATCC MYA-4892 / CBS 513.88 / FGSC A1513)</name>
    <dbReference type="NCBI Taxonomy" id="425011"/>
    <lineage>
        <taxon>Eukaryota</taxon>
        <taxon>Fungi</taxon>
        <taxon>Dikarya</taxon>
        <taxon>Ascomycota</taxon>
        <taxon>Pezizomycotina</taxon>
        <taxon>Eurotiomycetes</taxon>
        <taxon>Eurotiomycetidae</taxon>
        <taxon>Eurotiales</taxon>
        <taxon>Aspergillaceae</taxon>
        <taxon>Aspergillus</taxon>
        <taxon>Aspergillus subgen. Circumdati</taxon>
    </lineage>
</organism>
<dbReference type="EC" id="3.2.1.55"/>
<dbReference type="EMBL" id="AM270045">
    <property type="protein sequence ID" value="CAK38069.1"/>
    <property type="molecule type" value="Genomic_DNA"/>
</dbReference>
<dbReference type="RefSeq" id="XP_001389998.1">
    <property type="nucleotide sequence ID" value="XM_001389961.2"/>
</dbReference>
<dbReference type="SMR" id="A2QFV9"/>
<dbReference type="CAZy" id="GH62">
    <property type="family name" value="Glycoside Hydrolase Family 62"/>
</dbReference>
<dbReference type="EnsemblFungi" id="CAK38069">
    <property type="protein sequence ID" value="CAK38069"/>
    <property type="gene ID" value="An03g00960"/>
</dbReference>
<dbReference type="GeneID" id="4980084"/>
<dbReference type="KEGG" id="ang:An03g00960"/>
<dbReference type="VEuPathDB" id="FungiDB:An03g00960"/>
<dbReference type="HOGENOM" id="CLU_041805_0_0_1"/>
<dbReference type="Proteomes" id="UP000006706">
    <property type="component" value="Chromosome 6R"/>
</dbReference>
<dbReference type="GO" id="GO:0005576">
    <property type="term" value="C:extracellular region"/>
    <property type="evidence" value="ECO:0007669"/>
    <property type="project" value="UniProtKB-SubCell"/>
</dbReference>
<dbReference type="GO" id="GO:0046556">
    <property type="term" value="F:alpha-L-arabinofuranosidase activity"/>
    <property type="evidence" value="ECO:0007669"/>
    <property type="project" value="UniProtKB-EC"/>
</dbReference>
<dbReference type="GO" id="GO:0046373">
    <property type="term" value="P:L-arabinose metabolic process"/>
    <property type="evidence" value="ECO:0007669"/>
    <property type="project" value="InterPro"/>
</dbReference>
<dbReference type="GO" id="GO:0045493">
    <property type="term" value="P:xylan catabolic process"/>
    <property type="evidence" value="ECO:0007669"/>
    <property type="project" value="UniProtKB-KW"/>
</dbReference>
<dbReference type="CDD" id="cd08987">
    <property type="entry name" value="GH62"/>
    <property type="match status" value="1"/>
</dbReference>
<dbReference type="Gene3D" id="2.115.10.20">
    <property type="entry name" value="Glycosyl hydrolase domain, family 43"/>
    <property type="match status" value="1"/>
</dbReference>
<dbReference type="InterPro" id="IPR005193">
    <property type="entry name" value="GH62_arabinosidase"/>
</dbReference>
<dbReference type="InterPro" id="IPR023296">
    <property type="entry name" value="Glyco_hydro_beta-prop_sf"/>
</dbReference>
<dbReference type="PANTHER" id="PTHR40631">
    <property type="entry name" value="ALPHA-L-ARABINOFURANOSIDASE AXHA-2-RELATED"/>
    <property type="match status" value="1"/>
</dbReference>
<dbReference type="PANTHER" id="PTHR40631:SF1">
    <property type="entry name" value="ALPHA-L-ARABINOFURANOSIDASE AXHA-2-RELATED"/>
    <property type="match status" value="1"/>
</dbReference>
<dbReference type="Pfam" id="PF03664">
    <property type="entry name" value="Glyco_hydro_62"/>
    <property type="match status" value="1"/>
</dbReference>
<dbReference type="SUPFAM" id="SSF75005">
    <property type="entry name" value="Arabinanase/levansucrase/invertase"/>
    <property type="match status" value="1"/>
</dbReference>
<sequence>MKFLKAKGSLLSSGIYLIALAPFVNAKCALPSTYSWTSTDALATPKSGWTALKDFTDVVSNGKHIVYASTTDTQGNYGSMGFGAFSDWSDMASASQTATSFSAVAPTLFYFQPKSIWVLAYQWGSSTFTYRTSQDPTNVNGWSSEQALFTGKISGSSTGAIDQTVIGDDTNMYLFFAGDNGKIYRSSMSINDFPGSFGSQYEEILSGATNDLFEAVQVYTVDGGEGDSKYLMIVEAIGSTGHRYFRSFTASSLGGEWTAQAASEDQPFAGKANSGATWTDDISHGDLVRNNPDQTMTVDPCNLQLLYQGHDPNSNSDYNLLPWKPGVLTLKQ</sequence>
<comment type="function">
    <text evidence="1">Alpha-L-arabinofuranosidase involved in the hydrolysis of xylan, a major structural heterogeneous polysaccharide found in plant biomass representing the second most abundant polysaccharide in the biosphere, after cellulose. Releases L-arabinose from arabinoxylan (By similarity).</text>
</comment>
<comment type="catalytic activity">
    <reaction>
        <text>Hydrolysis of terminal non-reducing alpha-L-arabinofuranoside residues in alpha-L-arabinosides.</text>
        <dbReference type="EC" id="3.2.1.55"/>
    </reaction>
</comment>
<comment type="subcellular location">
    <subcellularLocation>
        <location evidence="1">Secreted</location>
    </subcellularLocation>
</comment>
<comment type="similarity">
    <text evidence="3">Belongs to the glycosyl hydrolase 62 family.</text>
</comment>
<feature type="signal peptide" evidence="2">
    <location>
        <begin position="1"/>
        <end position="26"/>
    </location>
</feature>
<feature type="chain" id="PRO_5000219727" description="Probable alpha-L-arabinofuranosidase axhA">
    <location>
        <begin position="27"/>
        <end position="332"/>
    </location>
</feature>
<keyword id="KW-0119">Carbohydrate metabolism</keyword>
<keyword id="KW-0326">Glycosidase</keyword>
<keyword id="KW-0378">Hydrolase</keyword>
<keyword id="KW-0624">Polysaccharide degradation</keyword>
<keyword id="KW-1185">Reference proteome</keyword>
<keyword id="KW-0964">Secreted</keyword>
<keyword id="KW-0732">Signal</keyword>
<keyword id="KW-0858">Xylan degradation</keyword>
<protein>
    <recommendedName>
        <fullName>Probable alpha-L-arabinofuranosidase axhA</fullName>
        <ecNumber>3.2.1.55</ecNumber>
    </recommendedName>
    <alternativeName>
        <fullName>Arabinoxylan arabinofuranohydrolase axhA</fullName>
    </alternativeName>
</protein>
<reference key="1">
    <citation type="journal article" date="2007" name="Nat. Biotechnol.">
        <title>Genome sequencing and analysis of the versatile cell factory Aspergillus niger CBS 513.88.</title>
        <authorList>
            <person name="Pel H.J."/>
            <person name="de Winde J.H."/>
            <person name="Archer D.B."/>
            <person name="Dyer P.S."/>
            <person name="Hofmann G."/>
            <person name="Schaap P.J."/>
            <person name="Turner G."/>
            <person name="de Vries R.P."/>
            <person name="Albang R."/>
            <person name="Albermann K."/>
            <person name="Andersen M.R."/>
            <person name="Bendtsen J.D."/>
            <person name="Benen J.A.E."/>
            <person name="van den Berg M."/>
            <person name="Breestraat S."/>
            <person name="Caddick M.X."/>
            <person name="Contreras R."/>
            <person name="Cornell M."/>
            <person name="Coutinho P.M."/>
            <person name="Danchin E.G.J."/>
            <person name="Debets A.J.M."/>
            <person name="Dekker P."/>
            <person name="van Dijck P.W.M."/>
            <person name="van Dijk A."/>
            <person name="Dijkhuizen L."/>
            <person name="Driessen A.J.M."/>
            <person name="d'Enfert C."/>
            <person name="Geysens S."/>
            <person name="Goosen C."/>
            <person name="Groot G.S.P."/>
            <person name="de Groot P.W.J."/>
            <person name="Guillemette T."/>
            <person name="Henrissat B."/>
            <person name="Herweijer M."/>
            <person name="van den Hombergh J.P.T.W."/>
            <person name="van den Hondel C.A.M.J.J."/>
            <person name="van der Heijden R.T.J.M."/>
            <person name="van der Kaaij R.M."/>
            <person name="Klis F.M."/>
            <person name="Kools H.J."/>
            <person name="Kubicek C.P."/>
            <person name="van Kuyk P.A."/>
            <person name="Lauber J."/>
            <person name="Lu X."/>
            <person name="van der Maarel M.J.E.C."/>
            <person name="Meulenberg R."/>
            <person name="Menke H."/>
            <person name="Mortimer M.A."/>
            <person name="Nielsen J."/>
            <person name="Oliver S.G."/>
            <person name="Olsthoorn M."/>
            <person name="Pal K."/>
            <person name="van Peij N.N.M.E."/>
            <person name="Ram A.F.J."/>
            <person name="Rinas U."/>
            <person name="Roubos J.A."/>
            <person name="Sagt C.M.J."/>
            <person name="Schmoll M."/>
            <person name="Sun J."/>
            <person name="Ussery D."/>
            <person name="Varga J."/>
            <person name="Vervecken W."/>
            <person name="van de Vondervoort P.J.J."/>
            <person name="Wedler H."/>
            <person name="Woesten H.A.B."/>
            <person name="Zeng A.-P."/>
            <person name="van Ooyen A.J.J."/>
            <person name="Visser J."/>
            <person name="Stam H."/>
        </authorList>
    </citation>
    <scope>NUCLEOTIDE SEQUENCE [LARGE SCALE GENOMIC DNA]</scope>
    <source>
        <strain>ATCC MYA-4892 / CBS 513.88 / FGSC A1513</strain>
    </source>
</reference>
<name>AXHA_ASPNC</name>